<organism>
    <name type="scientific">Shigella boydii serotype 4 (strain Sb227)</name>
    <dbReference type="NCBI Taxonomy" id="300268"/>
    <lineage>
        <taxon>Bacteria</taxon>
        <taxon>Pseudomonadati</taxon>
        <taxon>Pseudomonadota</taxon>
        <taxon>Gammaproteobacteria</taxon>
        <taxon>Enterobacterales</taxon>
        <taxon>Enterobacteriaceae</taxon>
        <taxon>Shigella</taxon>
    </lineage>
</organism>
<protein>
    <recommendedName>
        <fullName evidence="1">Valine--tRNA ligase</fullName>
        <ecNumber evidence="1">6.1.1.9</ecNumber>
    </recommendedName>
    <alternativeName>
        <fullName evidence="1">Valyl-tRNA synthetase</fullName>
        <shortName evidence="1">ValRS</shortName>
    </alternativeName>
</protein>
<reference key="1">
    <citation type="journal article" date="2005" name="Nucleic Acids Res.">
        <title>Genome dynamics and diversity of Shigella species, the etiologic agents of bacillary dysentery.</title>
        <authorList>
            <person name="Yang F."/>
            <person name="Yang J."/>
            <person name="Zhang X."/>
            <person name="Chen L."/>
            <person name="Jiang Y."/>
            <person name="Yan Y."/>
            <person name="Tang X."/>
            <person name="Wang J."/>
            <person name="Xiong Z."/>
            <person name="Dong J."/>
            <person name="Xue Y."/>
            <person name="Zhu Y."/>
            <person name="Xu X."/>
            <person name="Sun L."/>
            <person name="Chen S."/>
            <person name="Nie H."/>
            <person name="Peng J."/>
            <person name="Xu J."/>
            <person name="Wang Y."/>
            <person name="Yuan Z."/>
            <person name="Wen Y."/>
            <person name="Yao Z."/>
            <person name="Shen Y."/>
            <person name="Qiang B."/>
            <person name="Hou Y."/>
            <person name="Yu J."/>
            <person name="Jin Q."/>
        </authorList>
    </citation>
    <scope>NUCLEOTIDE SEQUENCE [LARGE SCALE GENOMIC DNA]</scope>
    <source>
        <strain>Sb227</strain>
    </source>
</reference>
<feature type="chain" id="PRO_0000224554" description="Valine--tRNA ligase">
    <location>
        <begin position="1"/>
        <end position="951"/>
    </location>
</feature>
<feature type="coiled-coil region" evidence="1">
    <location>
        <begin position="880"/>
        <end position="944"/>
    </location>
</feature>
<feature type="short sequence motif" description="'HIGH' region">
    <location>
        <begin position="42"/>
        <end position="52"/>
    </location>
</feature>
<feature type="short sequence motif" description="'KMSKS' region">
    <location>
        <begin position="554"/>
        <end position="558"/>
    </location>
</feature>
<feature type="binding site" evidence="1">
    <location>
        <position position="557"/>
    </location>
    <ligand>
        <name>ATP</name>
        <dbReference type="ChEBI" id="CHEBI:30616"/>
    </ligand>
</feature>
<comment type="function">
    <text evidence="1">Catalyzes the attachment of valine to tRNA(Val). As ValRS can inadvertently accommodate and process structurally similar amino acids such as threonine, to avoid such errors, it has a 'posttransfer' editing activity that hydrolyzes mischarged Thr-tRNA(Val) in a tRNA-dependent manner.</text>
</comment>
<comment type="catalytic activity">
    <reaction evidence="1">
        <text>tRNA(Val) + L-valine + ATP = L-valyl-tRNA(Val) + AMP + diphosphate</text>
        <dbReference type="Rhea" id="RHEA:10704"/>
        <dbReference type="Rhea" id="RHEA-COMP:9672"/>
        <dbReference type="Rhea" id="RHEA-COMP:9708"/>
        <dbReference type="ChEBI" id="CHEBI:30616"/>
        <dbReference type="ChEBI" id="CHEBI:33019"/>
        <dbReference type="ChEBI" id="CHEBI:57762"/>
        <dbReference type="ChEBI" id="CHEBI:78442"/>
        <dbReference type="ChEBI" id="CHEBI:78537"/>
        <dbReference type="ChEBI" id="CHEBI:456215"/>
        <dbReference type="EC" id="6.1.1.9"/>
    </reaction>
</comment>
<comment type="subunit">
    <text evidence="1">Monomer.</text>
</comment>
<comment type="subcellular location">
    <subcellularLocation>
        <location evidence="1">Cytoplasm</location>
    </subcellularLocation>
</comment>
<comment type="domain">
    <text evidence="1">ValRS has two distinct active sites: one for aminoacylation and one for editing. The misactivated threonine is translocated from the active site to the editing site.</text>
</comment>
<comment type="domain">
    <text evidence="1">The C-terminal coiled-coil domain is crucial for aminoacylation activity.</text>
</comment>
<comment type="similarity">
    <text evidence="1">Belongs to the class-I aminoacyl-tRNA synthetase family. ValS type 1 subfamily.</text>
</comment>
<accession>Q31TK0</accession>
<name>SYV_SHIBS</name>
<dbReference type="EC" id="6.1.1.9" evidence="1"/>
<dbReference type="EMBL" id="CP000036">
    <property type="protein sequence ID" value="ABB68608.1"/>
    <property type="molecule type" value="Genomic_DNA"/>
</dbReference>
<dbReference type="RefSeq" id="WP_000416407.1">
    <property type="nucleotide sequence ID" value="NC_007613.1"/>
</dbReference>
<dbReference type="SMR" id="Q31TK0"/>
<dbReference type="GeneID" id="93777560"/>
<dbReference type="KEGG" id="sbo:SBO_4182"/>
<dbReference type="HOGENOM" id="CLU_001493_0_2_6"/>
<dbReference type="Proteomes" id="UP000007067">
    <property type="component" value="Chromosome"/>
</dbReference>
<dbReference type="GO" id="GO:0005829">
    <property type="term" value="C:cytosol"/>
    <property type="evidence" value="ECO:0007669"/>
    <property type="project" value="TreeGrafter"/>
</dbReference>
<dbReference type="GO" id="GO:0002161">
    <property type="term" value="F:aminoacyl-tRNA deacylase activity"/>
    <property type="evidence" value="ECO:0007669"/>
    <property type="project" value="InterPro"/>
</dbReference>
<dbReference type="GO" id="GO:0005524">
    <property type="term" value="F:ATP binding"/>
    <property type="evidence" value="ECO:0007669"/>
    <property type="project" value="UniProtKB-UniRule"/>
</dbReference>
<dbReference type="GO" id="GO:0004832">
    <property type="term" value="F:valine-tRNA ligase activity"/>
    <property type="evidence" value="ECO:0007669"/>
    <property type="project" value="UniProtKB-UniRule"/>
</dbReference>
<dbReference type="GO" id="GO:0006438">
    <property type="term" value="P:valyl-tRNA aminoacylation"/>
    <property type="evidence" value="ECO:0007669"/>
    <property type="project" value="UniProtKB-UniRule"/>
</dbReference>
<dbReference type="CDD" id="cd07962">
    <property type="entry name" value="Anticodon_Ia_Val"/>
    <property type="match status" value="1"/>
</dbReference>
<dbReference type="CDD" id="cd00817">
    <property type="entry name" value="ValRS_core"/>
    <property type="match status" value="1"/>
</dbReference>
<dbReference type="FunFam" id="1.10.287.380:FF:000001">
    <property type="entry name" value="Valine--tRNA ligase"/>
    <property type="match status" value="1"/>
</dbReference>
<dbReference type="FunFam" id="1.10.730.10:FF:000007">
    <property type="entry name" value="Valine--tRNA ligase"/>
    <property type="match status" value="1"/>
</dbReference>
<dbReference type="FunFam" id="3.40.50.620:FF:000032">
    <property type="entry name" value="Valine--tRNA ligase"/>
    <property type="match status" value="1"/>
</dbReference>
<dbReference type="FunFam" id="3.40.50.620:FF:000146">
    <property type="entry name" value="Valine--tRNA ligase"/>
    <property type="match status" value="1"/>
</dbReference>
<dbReference type="FunFam" id="3.90.740.10:FF:000021">
    <property type="entry name" value="Valine--tRNA ligase"/>
    <property type="match status" value="1"/>
</dbReference>
<dbReference type="Gene3D" id="3.40.50.620">
    <property type="entry name" value="HUPs"/>
    <property type="match status" value="2"/>
</dbReference>
<dbReference type="Gene3D" id="1.10.730.10">
    <property type="entry name" value="Isoleucyl-tRNA Synthetase, Domain 1"/>
    <property type="match status" value="1"/>
</dbReference>
<dbReference type="Gene3D" id="1.10.287.380">
    <property type="entry name" value="Valyl-tRNA synthetase, C-terminal domain"/>
    <property type="match status" value="1"/>
</dbReference>
<dbReference type="Gene3D" id="3.90.740.10">
    <property type="entry name" value="Valyl/Leucyl/Isoleucyl-tRNA synthetase, editing domain"/>
    <property type="match status" value="2"/>
</dbReference>
<dbReference type="HAMAP" id="MF_02004">
    <property type="entry name" value="Val_tRNA_synth_type1"/>
    <property type="match status" value="1"/>
</dbReference>
<dbReference type="InterPro" id="IPR001412">
    <property type="entry name" value="aa-tRNA-synth_I_CS"/>
</dbReference>
<dbReference type="InterPro" id="IPR002300">
    <property type="entry name" value="aa-tRNA-synth_Ia"/>
</dbReference>
<dbReference type="InterPro" id="IPR033705">
    <property type="entry name" value="Anticodon_Ia_Val"/>
</dbReference>
<dbReference type="InterPro" id="IPR013155">
    <property type="entry name" value="M/V/L/I-tRNA-synth_anticd-bd"/>
</dbReference>
<dbReference type="InterPro" id="IPR014729">
    <property type="entry name" value="Rossmann-like_a/b/a_fold"/>
</dbReference>
<dbReference type="InterPro" id="IPR010978">
    <property type="entry name" value="tRNA-bd_arm"/>
</dbReference>
<dbReference type="InterPro" id="IPR009080">
    <property type="entry name" value="tRNAsynth_Ia_anticodon-bd"/>
</dbReference>
<dbReference type="InterPro" id="IPR037118">
    <property type="entry name" value="Val-tRNA_synth_C_sf"/>
</dbReference>
<dbReference type="InterPro" id="IPR019499">
    <property type="entry name" value="Val-tRNA_synth_tRNA-bd"/>
</dbReference>
<dbReference type="InterPro" id="IPR009008">
    <property type="entry name" value="Val/Leu/Ile-tRNA-synth_edit"/>
</dbReference>
<dbReference type="InterPro" id="IPR002303">
    <property type="entry name" value="Valyl-tRNA_ligase"/>
</dbReference>
<dbReference type="NCBIfam" id="NF004349">
    <property type="entry name" value="PRK05729.1"/>
    <property type="match status" value="1"/>
</dbReference>
<dbReference type="NCBIfam" id="TIGR00422">
    <property type="entry name" value="valS"/>
    <property type="match status" value="1"/>
</dbReference>
<dbReference type="PANTHER" id="PTHR11946:SF93">
    <property type="entry name" value="VALINE--TRNA LIGASE, CHLOROPLASTIC_MITOCHONDRIAL 2"/>
    <property type="match status" value="1"/>
</dbReference>
<dbReference type="PANTHER" id="PTHR11946">
    <property type="entry name" value="VALYL-TRNA SYNTHETASES"/>
    <property type="match status" value="1"/>
</dbReference>
<dbReference type="Pfam" id="PF08264">
    <property type="entry name" value="Anticodon_1"/>
    <property type="match status" value="1"/>
</dbReference>
<dbReference type="Pfam" id="PF00133">
    <property type="entry name" value="tRNA-synt_1"/>
    <property type="match status" value="1"/>
</dbReference>
<dbReference type="Pfam" id="PF10458">
    <property type="entry name" value="Val_tRNA-synt_C"/>
    <property type="match status" value="1"/>
</dbReference>
<dbReference type="PRINTS" id="PR00986">
    <property type="entry name" value="TRNASYNTHVAL"/>
</dbReference>
<dbReference type="SUPFAM" id="SSF47323">
    <property type="entry name" value="Anticodon-binding domain of a subclass of class I aminoacyl-tRNA synthetases"/>
    <property type="match status" value="1"/>
</dbReference>
<dbReference type="SUPFAM" id="SSF52374">
    <property type="entry name" value="Nucleotidylyl transferase"/>
    <property type="match status" value="1"/>
</dbReference>
<dbReference type="SUPFAM" id="SSF46589">
    <property type="entry name" value="tRNA-binding arm"/>
    <property type="match status" value="1"/>
</dbReference>
<dbReference type="SUPFAM" id="SSF50677">
    <property type="entry name" value="ValRS/IleRS/LeuRS editing domain"/>
    <property type="match status" value="1"/>
</dbReference>
<dbReference type="PROSITE" id="PS00178">
    <property type="entry name" value="AA_TRNA_LIGASE_I"/>
    <property type="match status" value="1"/>
</dbReference>
<keyword id="KW-0030">Aminoacyl-tRNA synthetase</keyword>
<keyword id="KW-0067">ATP-binding</keyword>
<keyword id="KW-0175">Coiled coil</keyword>
<keyword id="KW-0963">Cytoplasm</keyword>
<keyword id="KW-0436">Ligase</keyword>
<keyword id="KW-0547">Nucleotide-binding</keyword>
<keyword id="KW-0648">Protein biosynthesis</keyword>
<sequence>MEKTYNPQDIEQPLYEHWEKQGYFKPNGDESQESFCIMIPPPNVTGSLHMGHAFQQTIMDTMIRYQRMQGKNTLWQVGTDHAGIATQMVVERKIAAEEGKTRHDYGREAFIDKIWEWKAESGGTITRQMRRLGNSVDWERERFTMDEGLSNAVKEVFVRLYKEDLIYRGKRLVNWDPKLRTAISDLEVENRESKGSMWHIRYPLADGAKTADGKDYLVVATTRPETLLGDTGVAVNPEDPRYKDLIGKYVILPLVNRRIPIVGDEHADMEKGTGCVKITPAHDFNDYEVGKRHALPMINILTFDGDIRESAQVFDTKGNESDVYSSEIPAEFQKLERFAARKAVVAAVDALGLLEEIKPHDLTVPYGDRGGVVIEPMLTDQWYVRADVLAKPAVEAVENGDIQFVPKQYENMYFSWMRDIQDWCISRQLWWGHRIPAWYDEAGNVYVGRNEEEVRKENNLGADVALRQDEDVLDTWFSSALWTFSTLGWPENTDALRQFHPTSVMVSGFDIIFFWIARMIMMTMHFIKDENGKPQVPFHTVYMTGLIRDDEGQKMSKSKGNVIDPLDMVDGISLPELLEKRTGNMMQPQLADKIRKRTEKQFPNGIEPHGTDALRFTLAALASTGRDINWDMKRLEGYRNFCNKLWNASRFVLMNTEGQDCGFNGGEMTLSLADRWILAEFNQTIKAYREALDSFRFDIAAGILYEFTWNQFCDWYLELTKPVMNGGTEAELRGTRHTLVTVLEGLLRLAHPIIPFITETIWQRVKVLCGITADTIMLQPFPQYDASQVDEAALADTEWLKQAIVAVRNIRAEMNIAPGKPLELLLRGCSADAERRVNENRGFLQTLARLESITVLPADDKGPVSVTKIIDGAELLIPMAGLINKEDELARLAKEVAKIEGEISRIENKLANEGFVARAPEAVIAKEREKLEGYAEAKAKLIEQQAVIAAL</sequence>
<evidence type="ECO:0000255" key="1">
    <source>
        <dbReference type="HAMAP-Rule" id="MF_02004"/>
    </source>
</evidence>
<gene>
    <name evidence="1" type="primary">valS</name>
    <name type="ordered locus">SBO_4182</name>
</gene>
<proteinExistence type="inferred from homology"/>